<proteinExistence type="evidence at transcript level"/>
<comment type="subcellular location">
    <subcellularLocation>
        <location evidence="1">Nucleus</location>
    </subcellularLocation>
</comment>
<comment type="similarity">
    <text evidence="2">Belongs to the pirin family.</text>
</comment>
<name>PRNL1_ARATH</name>
<organism>
    <name type="scientific">Arabidopsis thaliana</name>
    <name type="common">Mouse-ear cress</name>
    <dbReference type="NCBI Taxonomy" id="3702"/>
    <lineage>
        <taxon>Eukaryota</taxon>
        <taxon>Viridiplantae</taxon>
        <taxon>Streptophyta</taxon>
        <taxon>Embryophyta</taxon>
        <taxon>Tracheophyta</taxon>
        <taxon>Spermatophyta</taxon>
        <taxon>Magnoliopsida</taxon>
        <taxon>eudicotyledons</taxon>
        <taxon>Gunneridae</taxon>
        <taxon>Pentapetalae</taxon>
        <taxon>rosids</taxon>
        <taxon>malvids</taxon>
        <taxon>Brassicales</taxon>
        <taxon>Brassicaceae</taxon>
        <taxon>Camelineae</taxon>
        <taxon>Arabidopsis</taxon>
    </lineage>
</organism>
<sequence>MPISEKSSATNTRLVVKKLFARQLHEGFGAVVRRSIGRFEFRYFDPFLVLDEFSVSAPAGFPDHPHRGFETVTYMLEGEILHEDCEGHKGVIREGGLQWMTAGKGIVHSEMPSSNSNGITHNKGLQLWINLSSRQKLVEPSYQEIESKDIAETEKDGVRVRVIAGEWNGVKSKICTRTPTMYLDFTLSPGSRISQPIPLHWNAFVYVLQGHGHFGDSKLQHSAAAAHHLLVLGLGGDMLEAWNGSDSGLPLRFILVAGEPIGEPMVQFGPFVMNTQEEIDETIDDFENFRNGFEKARHWKSQAASALGLF</sequence>
<accession>Q9LPS9</accession>
<accession>B3LFB5</accession>
<accession>Q9C6P9</accession>
<gene>
    <name type="ordered locus">At1g50590</name>
    <name type="ORF">F11F12.9</name>
    <name type="ORF">F17J6.11</name>
</gene>
<protein>
    <recommendedName>
        <fullName>Pirin-like protein At1g50590</fullName>
    </recommendedName>
</protein>
<evidence type="ECO:0000250" key="1"/>
<evidence type="ECO:0000305" key="2"/>
<reference key="1">
    <citation type="journal article" date="2000" name="Nature">
        <title>Sequence and analysis of chromosome 1 of the plant Arabidopsis thaliana.</title>
        <authorList>
            <person name="Theologis A."/>
            <person name="Ecker J.R."/>
            <person name="Palm C.J."/>
            <person name="Federspiel N.A."/>
            <person name="Kaul S."/>
            <person name="White O."/>
            <person name="Alonso J."/>
            <person name="Altafi H."/>
            <person name="Araujo R."/>
            <person name="Bowman C.L."/>
            <person name="Brooks S.Y."/>
            <person name="Buehler E."/>
            <person name="Chan A."/>
            <person name="Chao Q."/>
            <person name="Chen H."/>
            <person name="Cheuk R.F."/>
            <person name="Chin C.W."/>
            <person name="Chung M.K."/>
            <person name="Conn L."/>
            <person name="Conway A.B."/>
            <person name="Conway A.R."/>
            <person name="Creasy T.H."/>
            <person name="Dewar K."/>
            <person name="Dunn P."/>
            <person name="Etgu P."/>
            <person name="Feldblyum T.V."/>
            <person name="Feng J.-D."/>
            <person name="Fong B."/>
            <person name="Fujii C.Y."/>
            <person name="Gill J.E."/>
            <person name="Goldsmith A.D."/>
            <person name="Haas B."/>
            <person name="Hansen N.F."/>
            <person name="Hughes B."/>
            <person name="Huizar L."/>
            <person name="Hunter J.L."/>
            <person name="Jenkins J."/>
            <person name="Johnson-Hopson C."/>
            <person name="Khan S."/>
            <person name="Khaykin E."/>
            <person name="Kim C.J."/>
            <person name="Koo H.L."/>
            <person name="Kremenetskaia I."/>
            <person name="Kurtz D.B."/>
            <person name="Kwan A."/>
            <person name="Lam B."/>
            <person name="Langin-Hooper S."/>
            <person name="Lee A."/>
            <person name="Lee J.M."/>
            <person name="Lenz C.A."/>
            <person name="Li J.H."/>
            <person name="Li Y.-P."/>
            <person name="Lin X."/>
            <person name="Liu S.X."/>
            <person name="Liu Z.A."/>
            <person name="Luros J.S."/>
            <person name="Maiti R."/>
            <person name="Marziali A."/>
            <person name="Militscher J."/>
            <person name="Miranda M."/>
            <person name="Nguyen M."/>
            <person name="Nierman W.C."/>
            <person name="Osborne B.I."/>
            <person name="Pai G."/>
            <person name="Peterson J."/>
            <person name="Pham P.K."/>
            <person name="Rizzo M."/>
            <person name="Rooney T."/>
            <person name="Rowley D."/>
            <person name="Sakano H."/>
            <person name="Salzberg S.L."/>
            <person name="Schwartz J.R."/>
            <person name="Shinn P."/>
            <person name="Southwick A.M."/>
            <person name="Sun H."/>
            <person name="Tallon L.J."/>
            <person name="Tambunga G."/>
            <person name="Toriumi M.J."/>
            <person name="Town C.D."/>
            <person name="Utterback T."/>
            <person name="Van Aken S."/>
            <person name="Vaysberg M."/>
            <person name="Vysotskaia V.S."/>
            <person name="Walker M."/>
            <person name="Wu D."/>
            <person name="Yu G."/>
            <person name="Fraser C.M."/>
            <person name="Venter J.C."/>
            <person name="Davis R.W."/>
        </authorList>
    </citation>
    <scope>NUCLEOTIDE SEQUENCE [LARGE SCALE GENOMIC DNA]</scope>
    <source>
        <strain>cv. Columbia</strain>
    </source>
</reference>
<reference key="2">
    <citation type="journal article" date="2017" name="Plant J.">
        <title>Araport11: a complete reannotation of the Arabidopsis thaliana reference genome.</title>
        <authorList>
            <person name="Cheng C.Y."/>
            <person name="Krishnakumar V."/>
            <person name="Chan A.P."/>
            <person name="Thibaud-Nissen F."/>
            <person name="Schobel S."/>
            <person name="Town C.D."/>
        </authorList>
    </citation>
    <scope>GENOME REANNOTATION</scope>
    <source>
        <strain>cv. Columbia</strain>
    </source>
</reference>
<reference key="3">
    <citation type="submission" date="2008-06" db="EMBL/GenBank/DDBJ databases">
        <title>Arabidopsis ORF clones.</title>
        <authorList>
            <person name="De Los Reyes C."/>
            <person name="Quan R."/>
            <person name="Chen H."/>
            <person name="Bautista V.R."/>
            <person name="Kim C.J."/>
            <person name="Ecker J.R."/>
        </authorList>
    </citation>
    <scope>NUCLEOTIDE SEQUENCE [LARGE SCALE MRNA]</scope>
    <source>
        <strain>cv. Columbia</strain>
    </source>
</reference>
<dbReference type="EMBL" id="AC012561">
    <property type="protein sequence ID" value="AAF87876.1"/>
    <property type="molecule type" value="Genomic_DNA"/>
</dbReference>
<dbReference type="EMBL" id="AC079279">
    <property type="protein sequence ID" value="AAG51187.1"/>
    <property type="molecule type" value="Genomic_DNA"/>
</dbReference>
<dbReference type="EMBL" id="CP002684">
    <property type="protein sequence ID" value="AEE32567.1"/>
    <property type="molecule type" value="Genomic_DNA"/>
</dbReference>
<dbReference type="EMBL" id="BT033103">
    <property type="protein sequence ID" value="ACF16165.1"/>
    <property type="molecule type" value="mRNA"/>
</dbReference>
<dbReference type="PIR" id="D96542">
    <property type="entry name" value="D96542"/>
</dbReference>
<dbReference type="RefSeq" id="NP_175474.1">
    <property type="nucleotide sequence ID" value="NM_103941.2"/>
</dbReference>
<dbReference type="SMR" id="Q9LPS9"/>
<dbReference type="FunCoup" id="Q9LPS9">
    <property type="interactions" value="54"/>
</dbReference>
<dbReference type="STRING" id="3702.Q9LPS9"/>
<dbReference type="PaxDb" id="3702-AT1G50590.1"/>
<dbReference type="ProteomicsDB" id="234807"/>
<dbReference type="EnsemblPlants" id="AT1G50590.1">
    <property type="protein sequence ID" value="AT1G50590.1"/>
    <property type="gene ID" value="AT1G50590"/>
</dbReference>
<dbReference type="GeneID" id="841481"/>
<dbReference type="Gramene" id="AT1G50590.1">
    <property type="protein sequence ID" value="AT1G50590.1"/>
    <property type="gene ID" value="AT1G50590"/>
</dbReference>
<dbReference type="KEGG" id="ath:AT1G50590"/>
<dbReference type="Araport" id="AT1G50590"/>
<dbReference type="TAIR" id="AT1G50590"/>
<dbReference type="eggNOG" id="ENOG502QQ5A">
    <property type="taxonomic scope" value="Eukaryota"/>
</dbReference>
<dbReference type="HOGENOM" id="CLU_045717_5_2_1"/>
<dbReference type="InParanoid" id="Q9LPS9"/>
<dbReference type="OMA" id="GRMRHRD"/>
<dbReference type="PhylomeDB" id="Q9LPS9"/>
<dbReference type="PRO" id="PR:Q9LPS9"/>
<dbReference type="Proteomes" id="UP000006548">
    <property type="component" value="Chromosome 1"/>
</dbReference>
<dbReference type="ExpressionAtlas" id="Q9LPS9">
    <property type="expression patterns" value="baseline and differential"/>
</dbReference>
<dbReference type="GO" id="GO:0005634">
    <property type="term" value="C:nucleus"/>
    <property type="evidence" value="ECO:0007669"/>
    <property type="project" value="UniProtKB-SubCell"/>
</dbReference>
<dbReference type="CDD" id="cd02247">
    <property type="entry name" value="cupin_pirin_C"/>
    <property type="match status" value="1"/>
</dbReference>
<dbReference type="CDD" id="cd02909">
    <property type="entry name" value="cupin_pirin_N"/>
    <property type="match status" value="1"/>
</dbReference>
<dbReference type="FunFam" id="2.60.120.10:FF:000055">
    <property type="entry name" value="pirin"/>
    <property type="match status" value="1"/>
</dbReference>
<dbReference type="Gene3D" id="2.60.120.10">
    <property type="entry name" value="Jelly Rolls"/>
    <property type="match status" value="2"/>
</dbReference>
<dbReference type="InterPro" id="IPR012093">
    <property type="entry name" value="Pirin"/>
</dbReference>
<dbReference type="InterPro" id="IPR008778">
    <property type="entry name" value="Pirin_C_dom"/>
</dbReference>
<dbReference type="InterPro" id="IPR003829">
    <property type="entry name" value="Pirin_N_dom"/>
</dbReference>
<dbReference type="InterPro" id="IPR014710">
    <property type="entry name" value="RmlC-like_jellyroll"/>
</dbReference>
<dbReference type="InterPro" id="IPR011051">
    <property type="entry name" value="RmlC_Cupin_sf"/>
</dbReference>
<dbReference type="PANTHER" id="PTHR13903:SF23">
    <property type="entry name" value="OS09G0484800 PROTEIN"/>
    <property type="match status" value="1"/>
</dbReference>
<dbReference type="PANTHER" id="PTHR13903">
    <property type="entry name" value="PIRIN-RELATED"/>
    <property type="match status" value="1"/>
</dbReference>
<dbReference type="Pfam" id="PF02678">
    <property type="entry name" value="Pirin"/>
    <property type="match status" value="1"/>
</dbReference>
<dbReference type="Pfam" id="PF05726">
    <property type="entry name" value="Pirin_C"/>
    <property type="match status" value="1"/>
</dbReference>
<dbReference type="PIRSF" id="PIRSF006232">
    <property type="entry name" value="Pirin"/>
    <property type="match status" value="1"/>
</dbReference>
<dbReference type="SUPFAM" id="SSF51182">
    <property type="entry name" value="RmlC-like cupins"/>
    <property type="match status" value="1"/>
</dbReference>
<feature type="chain" id="PRO_0000214055" description="Pirin-like protein At1g50590">
    <location>
        <begin position="1"/>
        <end position="310"/>
    </location>
</feature>
<feature type="sequence conflict" description="In Ref. 1; AAG51187." evidence="2" ref="1">
    <location>
        <begin position="68"/>
        <end position="83"/>
    </location>
</feature>
<keyword id="KW-0539">Nucleus</keyword>
<keyword id="KW-1185">Reference proteome</keyword>